<evidence type="ECO:0000250" key="1"/>
<evidence type="ECO:0000250" key="2">
    <source>
        <dbReference type="UniProtKB" id="Q8GZD5"/>
    </source>
</evidence>
<evidence type="ECO:0000255" key="3"/>
<evidence type="ECO:0000255" key="4">
    <source>
        <dbReference type="PROSITE-ProRule" id="PRU01098"/>
    </source>
</evidence>
<evidence type="ECO:0000255" key="5">
    <source>
        <dbReference type="PROSITE-ProRule" id="PRU10064"/>
    </source>
</evidence>
<evidence type="ECO:0000269" key="6">
    <source>
    </source>
</evidence>
<evidence type="ECO:0000305" key="7"/>
<protein>
    <recommendedName>
        <fullName>Probable xyloglucan endotransglucosylase/hydrolase protein B</fullName>
        <ecNumber>2.4.1.207</ecNumber>
    </recommendedName>
    <alternativeName>
        <fullName>VaXTH2</fullName>
    </alternativeName>
</protein>
<sequence>MASSLLILCLVLVSLASSALCAAPRRPVDVPFGRNYIPTWAFDHIKYFNGGSEIQLHLDKYTGTGFQTKGSYLFGHFSMNIKMVPGDSAGTVTAFCLSSQNAEHDEIDFEFLGNRTGQPYILQTNVFTGGKGDREQRIYLWFDPTKAYHRYSVLWNMYQIVFLVDNIPIRVFKNLKELGVKFPFNQPMKVYNSLWNADDWATRGGLEKTDWSKAPFVAEYKGFHVDGCEASVNSRFCATQGKRWWDQTEFRDLDSFQWRRLKWVRQKFTIYNYCTDRTRYPQLPPECRRNRDI</sequence>
<accession>Q8LNZ5</accession>
<dbReference type="EC" id="2.4.1.207"/>
<dbReference type="EMBL" id="AB086396">
    <property type="protein sequence ID" value="BAC03238.1"/>
    <property type="molecule type" value="Genomic_DNA"/>
</dbReference>
<dbReference type="SMR" id="Q8LNZ5"/>
<dbReference type="CAZy" id="GH16">
    <property type="family name" value="Glycoside Hydrolase Family 16"/>
</dbReference>
<dbReference type="GlyCosmos" id="Q8LNZ5">
    <property type="glycosylation" value="1 site, No reported glycans"/>
</dbReference>
<dbReference type="GO" id="GO:0048046">
    <property type="term" value="C:apoplast"/>
    <property type="evidence" value="ECO:0007669"/>
    <property type="project" value="UniProtKB-SubCell"/>
</dbReference>
<dbReference type="GO" id="GO:0004553">
    <property type="term" value="F:hydrolase activity, hydrolyzing O-glycosyl compounds"/>
    <property type="evidence" value="ECO:0007669"/>
    <property type="project" value="InterPro"/>
</dbReference>
<dbReference type="GO" id="GO:0030247">
    <property type="term" value="F:polysaccharide binding"/>
    <property type="evidence" value="ECO:0000250"/>
    <property type="project" value="UniProtKB"/>
</dbReference>
<dbReference type="GO" id="GO:0016762">
    <property type="term" value="F:xyloglucan:xyloglucosyl transferase activity"/>
    <property type="evidence" value="ECO:0007669"/>
    <property type="project" value="UniProtKB-EC"/>
</dbReference>
<dbReference type="GO" id="GO:0042546">
    <property type="term" value="P:cell wall biogenesis"/>
    <property type="evidence" value="ECO:0007669"/>
    <property type="project" value="InterPro"/>
</dbReference>
<dbReference type="GO" id="GO:0071555">
    <property type="term" value="P:cell wall organization"/>
    <property type="evidence" value="ECO:0007669"/>
    <property type="project" value="UniProtKB-KW"/>
</dbReference>
<dbReference type="GO" id="GO:0010411">
    <property type="term" value="P:xyloglucan metabolic process"/>
    <property type="evidence" value="ECO:0007669"/>
    <property type="project" value="InterPro"/>
</dbReference>
<dbReference type="CDD" id="cd02176">
    <property type="entry name" value="GH16_XET"/>
    <property type="match status" value="1"/>
</dbReference>
<dbReference type="FunFam" id="2.60.120.200:FF:000025">
    <property type="entry name" value="Xyloglucan endotransglucosylase/hydrolase"/>
    <property type="match status" value="1"/>
</dbReference>
<dbReference type="Gene3D" id="2.60.120.200">
    <property type="match status" value="1"/>
</dbReference>
<dbReference type="InterPro" id="IPR044791">
    <property type="entry name" value="Beta-glucanase/XTH"/>
</dbReference>
<dbReference type="InterPro" id="IPR013320">
    <property type="entry name" value="ConA-like_dom_sf"/>
</dbReference>
<dbReference type="InterPro" id="IPR000757">
    <property type="entry name" value="GH16"/>
</dbReference>
<dbReference type="InterPro" id="IPR008263">
    <property type="entry name" value="GH16_AS"/>
</dbReference>
<dbReference type="InterPro" id="IPR010713">
    <property type="entry name" value="XET_C"/>
</dbReference>
<dbReference type="InterPro" id="IPR016455">
    <property type="entry name" value="XTH"/>
</dbReference>
<dbReference type="PANTHER" id="PTHR31062">
    <property type="entry name" value="XYLOGLUCAN ENDOTRANSGLUCOSYLASE/HYDROLASE PROTEIN 8-RELATED"/>
    <property type="match status" value="1"/>
</dbReference>
<dbReference type="Pfam" id="PF00722">
    <property type="entry name" value="Glyco_hydro_16"/>
    <property type="match status" value="1"/>
</dbReference>
<dbReference type="Pfam" id="PF06955">
    <property type="entry name" value="XET_C"/>
    <property type="match status" value="1"/>
</dbReference>
<dbReference type="PIRSF" id="PIRSF005604">
    <property type="entry name" value="XET"/>
    <property type="match status" value="1"/>
</dbReference>
<dbReference type="SUPFAM" id="SSF49899">
    <property type="entry name" value="Concanavalin A-like lectins/glucanases"/>
    <property type="match status" value="1"/>
</dbReference>
<dbReference type="PROSITE" id="PS01034">
    <property type="entry name" value="GH16_1"/>
    <property type="match status" value="1"/>
</dbReference>
<dbReference type="PROSITE" id="PS51762">
    <property type="entry name" value="GH16_2"/>
    <property type="match status" value="1"/>
</dbReference>
<keyword id="KW-0052">Apoplast</keyword>
<keyword id="KW-0134">Cell wall</keyword>
<keyword id="KW-0961">Cell wall biogenesis/degradation</keyword>
<keyword id="KW-1015">Disulfide bond</keyword>
<keyword id="KW-0325">Glycoprotein</keyword>
<keyword id="KW-0326">Glycosidase</keyword>
<keyword id="KW-0378">Hydrolase</keyword>
<keyword id="KW-0964">Secreted</keyword>
<keyword id="KW-0732">Signal</keyword>
<keyword id="KW-0808">Transferase</keyword>
<proteinExistence type="evidence at transcript level"/>
<feature type="signal peptide" evidence="3">
    <location>
        <begin position="1"/>
        <end position="21"/>
    </location>
</feature>
<feature type="chain" id="PRO_0000011838" description="Probable xyloglucan endotransglucosylase/hydrolase protein B">
    <location>
        <begin position="22"/>
        <end position="293"/>
    </location>
</feature>
<feature type="domain" description="GH16" evidence="4">
    <location>
        <begin position="23"/>
        <end position="220"/>
    </location>
</feature>
<feature type="active site" description="Nucleophile" evidence="5">
    <location>
        <position position="106"/>
    </location>
</feature>
<feature type="active site" description="Proton donor" evidence="5">
    <location>
        <position position="110"/>
    </location>
</feature>
<feature type="binding site" evidence="2">
    <location>
        <position position="110"/>
    </location>
    <ligand>
        <name>xyloglucan</name>
        <dbReference type="ChEBI" id="CHEBI:18233"/>
    </ligand>
</feature>
<feature type="binding site" evidence="2">
    <location>
        <begin position="123"/>
        <end position="125"/>
    </location>
    <ligand>
        <name>xyloglucan</name>
        <dbReference type="ChEBI" id="CHEBI:18233"/>
    </ligand>
</feature>
<feature type="binding site" evidence="2">
    <location>
        <begin position="133"/>
        <end position="135"/>
    </location>
    <ligand>
        <name>xyloglucan</name>
        <dbReference type="ChEBI" id="CHEBI:18233"/>
    </ligand>
</feature>
<feature type="binding site" evidence="2">
    <location>
        <begin position="199"/>
        <end position="200"/>
    </location>
    <ligand>
        <name>xyloglucan</name>
        <dbReference type="ChEBI" id="CHEBI:18233"/>
    </ligand>
</feature>
<feature type="binding site" evidence="2">
    <location>
        <position position="204"/>
    </location>
    <ligand>
        <name>xyloglucan</name>
        <dbReference type="ChEBI" id="CHEBI:18233"/>
    </ligand>
</feature>
<feature type="binding site" evidence="2">
    <location>
        <position position="279"/>
    </location>
    <ligand>
        <name>xyloglucan</name>
        <dbReference type="ChEBI" id="CHEBI:18233"/>
    </ligand>
</feature>
<feature type="site" description="Important for catalytic activity" evidence="2">
    <location>
        <position position="108"/>
    </location>
</feature>
<feature type="glycosylation site" description="N-linked (GlcNAc...) asparagine" evidence="3">
    <location>
        <position position="114"/>
    </location>
</feature>
<feature type="disulfide bond" evidence="2">
    <location>
        <begin position="228"/>
        <end position="237"/>
    </location>
</feature>
<feature type="disulfide bond" evidence="2">
    <location>
        <begin position="274"/>
        <end position="287"/>
    </location>
</feature>
<comment type="function">
    <text evidence="1">Catalyzes xyloglucan endohydrolysis (XEH) and/or endotransglycosylation (XET). Cleaves and religates xyloglucan polymers, an essential constituent of the primary cell wall, and thereby participates in cell wall construction of growing tissues (By similarity).</text>
</comment>
<comment type="catalytic activity">
    <reaction>
        <text>breaks a beta-(1-&gt;4) bond in the backbone of a xyloglucan and transfers the xyloglucanyl segment on to O-4 of the non-reducing terminal glucose residue of an acceptor, which can be a xyloglucan or an oligosaccharide of xyloglucan.</text>
        <dbReference type="EC" id="2.4.1.207"/>
    </reaction>
</comment>
<comment type="subcellular location">
    <subcellularLocation>
        <location evidence="7">Secreted</location>
        <location evidence="7">Cell wall</location>
    </subcellularLocation>
    <subcellularLocation>
        <location evidence="7">Secreted</location>
        <location evidence="7">Extracellular space</location>
        <location evidence="7">Apoplast</location>
    </subcellularLocation>
</comment>
<comment type="tissue specificity">
    <text evidence="6">Predominantly expressed in the phloem fibers of growing internodes. Weakly or not expressed in the xylem. In the internode, it is expressed closer to the bottom of the internode compared to XTHA.</text>
</comment>
<comment type="induction">
    <text evidence="6">Up-regulated by indole-3-acetic acid (IAA). Effect of IAA is not affected by mannitol. Not up-regulated by fusicoccin.</text>
</comment>
<comment type="PTM">
    <text evidence="1">Contains at least one intrachain disulfide bond essential for its enzymatic activity.</text>
</comment>
<comment type="similarity">
    <text evidence="7">Belongs to the glycosyl hydrolase 16 family. XTH group 1 subfamily.</text>
</comment>
<organism>
    <name type="scientific">Phaseolus angularis</name>
    <name type="common">Azuki bean</name>
    <name type="synonym">Vigna angularis</name>
    <dbReference type="NCBI Taxonomy" id="3914"/>
    <lineage>
        <taxon>Eukaryota</taxon>
        <taxon>Viridiplantae</taxon>
        <taxon>Streptophyta</taxon>
        <taxon>Embryophyta</taxon>
        <taxon>Tracheophyta</taxon>
        <taxon>Spermatophyta</taxon>
        <taxon>Magnoliopsida</taxon>
        <taxon>eudicotyledons</taxon>
        <taxon>Gunneridae</taxon>
        <taxon>Pentapetalae</taxon>
        <taxon>rosids</taxon>
        <taxon>fabids</taxon>
        <taxon>Fabales</taxon>
        <taxon>Fabaceae</taxon>
        <taxon>Papilionoideae</taxon>
        <taxon>50 kb inversion clade</taxon>
        <taxon>NPAAA clade</taxon>
        <taxon>indigoferoid/millettioid clade</taxon>
        <taxon>Phaseoleae</taxon>
        <taxon>Vigna</taxon>
    </lineage>
</organism>
<gene>
    <name type="primary">XTHB</name>
    <name type="synonym">XTH2</name>
</gene>
<reference key="1">
    <citation type="journal article" date="2003" name="Plant Cell Physiol.">
        <title>Two azuki bean XTH genes, VaXTH1 and VaXTH2, with similar tissue-specific expression profiles, are differently regulated by auxin.</title>
        <authorList>
            <person name="Nakamura T."/>
            <person name="Yokoyama R."/>
            <person name="Tomita E."/>
            <person name="Nishitani K."/>
        </authorList>
    </citation>
    <scope>NUCLEOTIDE SEQUENCE [GENOMIC DNA]</scope>
    <scope>TISSUE SPECIFICITY</scope>
    <scope>INDUCTION</scope>
    <source>
        <strain>cv. Takara Wase</strain>
    </source>
</reference>
<name>XTHB_PHAAN</name>